<keyword id="KW-0028">Amino-acid biosynthesis</keyword>
<keyword id="KW-0963">Cytoplasm</keyword>
<keyword id="KW-0368">Histidine biosynthesis</keyword>
<keyword id="KW-0378">Hydrolase</keyword>
<keyword id="KW-0460">Magnesium</keyword>
<keyword id="KW-0479">Metal-binding</keyword>
<keyword id="KW-1185">Reference proteome</keyword>
<keyword id="KW-0862">Zinc</keyword>
<name>HIS3_HALHL</name>
<protein>
    <recommendedName>
        <fullName evidence="1">Phosphoribosyl-AMP cyclohydrolase</fullName>
        <shortName evidence="1">PRA-CH</shortName>
        <ecNumber evidence="1">3.5.4.19</ecNumber>
    </recommendedName>
</protein>
<gene>
    <name evidence="1" type="primary">hisI</name>
    <name type="ordered locus">Hhal_1726</name>
</gene>
<sequence>MIEQNETARPGDGLDWSAVLDTLPFNSDGLLPAIAQQHDSNEVLMLAWMNRQALEETLQTGRVCYYSRSRGTLWRKGESSGQVQHLHELRLDCDGDTLLLRVDQQGPACHTGRRSCFYNVLQGNRVVVSEPPQVDPQTLYGP</sequence>
<reference key="1">
    <citation type="submission" date="2006-12" db="EMBL/GenBank/DDBJ databases">
        <title>Complete sequence of Halorhodospira halophila SL1.</title>
        <authorList>
            <consortium name="US DOE Joint Genome Institute"/>
            <person name="Copeland A."/>
            <person name="Lucas S."/>
            <person name="Lapidus A."/>
            <person name="Barry K."/>
            <person name="Detter J.C."/>
            <person name="Glavina del Rio T."/>
            <person name="Hammon N."/>
            <person name="Israni S."/>
            <person name="Dalin E."/>
            <person name="Tice H."/>
            <person name="Pitluck S."/>
            <person name="Saunders E."/>
            <person name="Brettin T."/>
            <person name="Bruce D."/>
            <person name="Han C."/>
            <person name="Tapia R."/>
            <person name="Schmutz J."/>
            <person name="Larimer F."/>
            <person name="Land M."/>
            <person name="Hauser L."/>
            <person name="Kyrpides N."/>
            <person name="Mikhailova N."/>
            <person name="Hoff W."/>
            <person name="Richardson P."/>
        </authorList>
    </citation>
    <scope>NUCLEOTIDE SEQUENCE [LARGE SCALE GENOMIC DNA]</scope>
    <source>
        <strain>DSM 244 / SL1</strain>
    </source>
</reference>
<evidence type="ECO:0000255" key="1">
    <source>
        <dbReference type="HAMAP-Rule" id="MF_01021"/>
    </source>
</evidence>
<accession>A1WXS8</accession>
<dbReference type="EC" id="3.5.4.19" evidence="1"/>
<dbReference type="EMBL" id="CP000544">
    <property type="protein sequence ID" value="ABM62490.1"/>
    <property type="molecule type" value="Genomic_DNA"/>
</dbReference>
<dbReference type="RefSeq" id="WP_011814512.1">
    <property type="nucleotide sequence ID" value="NC_008789.1"/>
</dbReference>
<dbReference type="SMR" id="A1WXS8"/>
<dbReference type="STRING" id="349124.Hhal_1726"/>
<dbReference type="KEGG" id="hha:Hhal_1726"/>
<dbReference type="eggNOG" id="COG0139">
    <property type="taxonomic scope" value="Bacteria"/>
</dbReference>
<dbReference type="HOGENOM" id="CLU_048577_5_2_6"/>
<dbReference type="OrthoDB" id="9795769at2"/>
<dbReference type="UniPathway" id="UPA00031">
    <property type="reaction ID" value="UER00008"/>
</dbReference>
<dbReference type="Proteomes" id="UP000000647">
    <property type="component" value="Chromosome"/>
</dbReference>
<dbReference type="GO" id="GO:0005737">
    <property type="term" value="C:cytoplasm"/>
    <property type="evidence" value="ECO:0007669"/>
    <property type="project" value="UniProtKB-SubCell"/>
</dbReference>
<dbReference type="GO" id="GO:0000287">
    <property type="term" value="F:magnesium ion binding"/>
    <property type="evidence" value="ECO:0007669"/>
    <property type="project" value="UniProtKB-UniRule"/>
</dbReference>
<dbReference type="GO" id="GO:0004635">
    <property type="term" value="F:phosphoribosyl-AMP cyclohydrolase activity"/>
    <property type="evidence" value="ECO:0007669"/>
    <property type="project" value="UniProtKB-UniRule"/>
</dbReference>
<dbReference type="GO" id="GO:0008270">
    <property type="term" value="F:zinc ion binding"/>
    <property type="evidence" value="ECO:0007669"/>
    <property type="project" value="UniProtKB-UniRule"/>
</dbReference>
<dbReference type="GO" id="GO:0000105">
    <property type="term" value="P:L-histidine biosynthetic process"/>
    <property type="evidence" value="ECO:0007669"/>
    <property type="project" value="UniProtKB-UniRule"/>
</dbReference>
<dbReference type="FunFam" id="3.10.20.810:FF:000001">
    <property type="entry name" value="Histidine biosynthesis bifunctional protein HisIE"/>
    <property type="match status" value="1"/>
</dbReference>
<dbReference type="Gene3D" id="4.10.80.70">
    <property type="match status" value="1"/>
</dbReference>
<dbReference type="Gene3D" id="3.10.20.810">
    <property type="entry name" value="Phosphoribosyl-AMP cyclohydrolase"/>
    <property type="match status" value="1"/>
</dbReference>
<dbReference type="HAMAP" id="MF_01021">
    <property type="entry name" value="HisI"/>
    <property type="match status" value="1"/>
</dbReference>
<dbReference type="InterPro" id="IPR026660">
    <property type="entry name" value="PRA-CH"/>
</dbReference>
<dbReference type="InterPro" id="IPR002496">
    <property type="entry name" value="PRib_AMP_CycHydrolase_dom"/>
</dbReference>
<dbReference type="InterPro" id="IPR038019">
    <property type="entry name" value="PRib_AMP_CycHydrolase_sf"/>
</dbReference>
<dbReference type="NCBIfam" id="NF000768">
    <property type="entry name" value="PRK00051.1"/>
    <property type="match status" value="1"/>
</dbReference>
<dbReference type="PANTHER" id="PTHR42945">
    <property type="entry name" value="HISTIDINE BIOSYNTHESIS BIFUNCTIONAL PROTEIN"/>
    <property type="match status" value="1"/>
</dbReference>
<dbReference type="PANTHER" id="PTHR42945:SF1">
    <property type="entry name" value="HISTIDINE BIOSYNTHESIS BIFUNCTIONAL PROTEIN HIS7"/>
    <property type="match status" value="1"/>
</dbReference>
<dbReference type="Pfam" id="PF01502">
    <property type="entry name" value="PRA-CH"/>
    <property type="match status" value="1"/>
</dbReference>
<dbReference type="SUPFAM" id="SSF141734">
    <property type="entry name" value="HisI-like"/>
    <property type="match status" value="1"/>
</dbReference>
<comment type="function">
    <text evidence="1">Catalyzes the hydrolysis of the adenine ring of phosphoribosyl-AMP.</text>
</comment>
<comment type="catalytic activity">
    <reaction evidence="1">
        <text>1-(5-phospho-beta-D-ribosyl)-5'-AMP + H2O = 1-(5-phospho-beta-D-ribosyl)-5-[(5-phospho-beta-D-ribosylamino)methylideneamino]imidazole-4-carboxamide</text>
        <dbReference type="Rhea" id="RHEA:20049"/>
        <dbReference type="ChEBI" id="CHEBI:15377"/>
        <dbReference type="ChEBI" id="CHEBI:58435"/>
        <dbReference type="ChEBI" id="CHEBI:59457"/>
        <dbReference type="EC" id="3.5.4.19"/>
    </reaction>
</comment>
<comment type="cofactor">
    <cofactor evidence="1">
        <name>Mg(2+)</name>
        <dbReference type="ChEBI" id="CHEBI:18420"/>
    </cofactor>
    <text evidence="1">Binds 1 Mg(2+) ion per subunit.</text>
</comment>
<comment type="cofactor">
    <cofactor evidence="1">
        <name>Zn(2+)</name>
        <dbReference type="ChEBI" id="CHEBI:29105"/>
    </cofactor>
    <text evidence="1">Binds 1 zinc ion per subunit.</text>
</comment>
<comment type="pathway">
    <text evidence="1">Amino-acid biosynthesis; L-histidine biosynthesis; L-histidine from 5-phospho-alpha-D-ribose 1-diphosphate: step 3/9.</text>
</comment>
<comment type="subunit">
    <text evidence="1">Homodimer.</text>
</comment>
<comment type="subcellular location">
    <subcellularLocation>
        <location evidence="1">Cytoplasm</location>
    </subcellularLocation>
</comment>
<comment type="similarity">
    <text evidence="1">Belongs to the PRA-CH family.</text>
</comment>
<feature type="chain" id="PRO_0000319689" description="Phosphoribosyl-AMP cyclohydrolase">
    <location>
        <begin position="1"/>
        <end position="142"/>
    </location>
</feature>
<feature type="binding site" evidence="1">
    <location>
        <position position="92"/>
    </location>
    <ligand>
        <name>Mg(2+)</name>
        <dbReference type="ChEBI" id="CHEBI:18420"/>
    </ligand>
</feature>
<feature type="binding site" evidence="1">
    <location>
        <position position="93"/>
    </location>
    <ligand>
        <name>Zn(2+)</name>
        <dbReference type="ChEBI" id="CHEBI:29105"/>
        <note>ligand shared between dimeric partners</note>
    </ligand>
</feature>
<feature type="binding site" evidence="1">
    <location>
        <position position="94"/>
    </location>
    <ligand>
        <name>Mg(2+)</name>
        <dbReference type="ChEBI" id="CHEBI:18420"/>
    </ligand>
</feature>
<feature type="binding site" evidence="1">
    <location>
        <position position="96"/>
    </location>
    <ligand>
        <name>Mg(2+)</name>
        <dbReference type="ChEBI" id="CHEBI:18420"/>
    </ligand>
</feature>
<feature type="binding site" evidence="1">
    <location>
        <position position="109"/>
    </location>
    <ligand>
        <name>Zn(2+)</name>
        <dbReference type="ChEBI" id="CHEBI:29105"/>
        <note>ligand shared between dimeric partners</note>
    </ligand>
</feature>
<feature type="binding site" evidence="1">
    <location>
        <position position="116"/>
    </location>
    <ligand>
        <name>Zn(2+)</name>
        <dbReference type="ChEBI" id="CHEBI:29105"/>
        <note>ligand shared between dimeric partners</note>
    </ligand>
</feature>
<proteinExistence type="inferred from homology"/>
<organism>
    <name type="scientific">Halorhodospira halophila (strain DSM 244 / SL1)</name>
    <name type="common">Ectothiorhodospira halophila (strain DSM 244 / SL1)</name>
    <dbReference type="NCBI Taxonomy" id="349124"/>
    <lineage>
        <taxon>Bacteria</taxon>
        <taxon>Pseudomonadati</taxon>
        <taxon>Pseudomonadota</taxon>
        <taxon>Gammaproteobacteria</taxon>
        <taxon>Chromatiales</taxon>
        <taxon>Ectothiorhodospiraceae</taxon>
        <taxon>Halorhodospira</taxon>
    </lineage>
</organism>